<protein>
    <recommendedName>
        <fullName evidence="9">GMP reductase</fullName>
        <ecNumber evidence="7">1.7.1.7</ecNumber>
    </recommendedName>
    <alternativeName>
        <fullName evidence="8">Guanosine 5'-monophosphate reductase</fullName>
        <shortName evidence="8">GMPR</shortName>
    </alternativeName>
</protein>
<keyword id="KW-0129">CBS domain</keyword>
<keyword id="KW-0521">NADP</keyword>
<keyword id="KW-0560">Oxidoreductase</keyword>
<keyword id="KW-0660">Purine salvage</keyword>
<keyword id="KW-1185">Reference proteome</keyword>
<keyword id="KW-0677">Repeat</keyword>
<proteinExistence type="evidence at protein level"/>
<name>GUAB1_MYCTU</name>
<accession>P9WKI3</accession>
<accession>L0TAS0</accession>
<accession>P65172</accession>
<accession>Q50591</accession>
<dbReference type="EC" id="1.7.1.7" evidence="7"/>
<dbReference type="EMBL" id="AL123456">
    <property type="protein sequence ID" value="CCP44609.1"/>
    <property type="molecule type" value="Genomic_DNA"/>
</dbReference>
<dbReference type="PIR" id="C70664">
    <property type="entry name" value="C70664"/>
</dbReference>
<dbReference type="RefSeq" id="NP_216359.1">
    <property type="nucleotide sequence ID" value="NC_000962.3"/>
</dbReference>
<dbReference type="RefSeq" id="WP_003902189.1">
    <property type="nucleotide sequence ID" value="NZ_NVQJ01000013.1"/>
</dbReference>
<dbReference type="SMR" id="P9WKI3"/>
<dbReference type="FunCoup" id="P9WKI3">
    <property type="interactions" value="36"/>
</dbReference>
<dbReference type="STRING" id="83332.Rv1843c"/>
<dbReference type="PaxDb" id="83332-Rv1843c"/>
<dbReference type="DNASU" id="885714"/>
<dbReference type="GeneID" id="885714"/>
<dbReference type="KEGG" id="mtu:Rv1843c"/>
<dbReference type="KEGG" id="mtv:RVBD_1843c"/>
<dbReference type="PATRIC" id="fig|83332.111.peg.2049"/>
<dbReference type="TubercuList" id="Rv1843c"/>
<dbReference type="eggNOG" id="COG0516">
    <property type="taxonomic scope" value="Bacteria"/>
</dbReference>
<dbReference type="eggNOG" id="COG0517">
    <property type="taxonomic scope" value="Bacteria"/>
</dbReference>
<dbReference type="InParanoid" id="P9WKI3"/>
<dbReference type="OrthoDB" id="9805398at2"/>
<dbReference type="PhylomeDB" id="P9WKI3"/>
<dbReference type="UniPathway" id="UPA00591"/>
<dbReference type="Proteomes" id="UP000001584">
    <property type="component" value="Chromosome"/>
</dbReference>
<dbReference type="GO" id="GO:0005829">
    <property type="term" value="C:cytosol"/>
    <property type="evidence" value="ECO:0007005"/>
    <property type="project" value="MTBBASE"/>
</dbReference>
<dbReference type="GO" id="GO:0005886">
    <property type="term" value="C:plasma membrane"/>
    <property type="evidence" value="ECO:0007005"/>
    <property type="project" value="MTBBASE"/>
</dbReference>
<dbReference type="GO" id="GO:0003920">
    <property type="term" value="F:GMP reductase activity"/>
    <property type="evidence" value="ECO:0007669"/>
    <property type="project" value="UniProtKB-UniRule"/>
</dbReference>
<dbReference type="GO" id="GO:0032264">
    <property type="term" value="P:IMP salvage"/>
    <property type="evidence" value="ECO:0007669"/>
    <property type="project" value="UniProtKB-UniRule"/>
</dbReference>
<dbReference type="GO" id="GO:0006166">
    <property type="term" value="P:purine ribonucleoside salvage"/>
    <property type="evidence" value="ECO:0007669"/>
    <property type="project" value="UniProtKB-KW"/>
</dbReference>
<dbReference type="CDD" id="cd02205">
    <property type="entry name" value="CBS_pair_SF"/>
    <property type="match status" value="1"/>
</dbReference>
<dbReference type="CDD" id="cd00381">
    <property type="entry name" value="IMPDH"/>
    <property type="match status" value="1"/>
</dbReference>
<dbReference type="FunFam" id="3.20.20.70:FF:000108">
    <property type="entry name" value="IMP dehydrogenase family protein"/>
    <property type="match status" value="1"/>
</dbReference>
<dbReference type="Gene3D" id="3.20.20.70">
    <property type="entry name" value="Aldolase class I"/>
    <property type="match status" value="1"/>
</dbReference>
<dbReference type="HAMAP" id="MF_02250">
    <property type="entry name" value="GMPR_GuaB1"/>
    <property type="match status" value="1"/>
</dbReference>
<dbReference type="InterPro" id="IPR013785">
    <property type="entry name" value="Aldolase_TIM"/>
</dbReference>
<dbReference type="InterPro" id="IPR000644">
    <property type="entry name" value="CBS_dom"/>
</dbReference>
<dbReference type="InterPro" id="IPR046342">
    <property type="entry name" value="CBS_dom_sf"/>
</dbReference>
<dbReference type="InterPro" id="IPR050139">
    <property type="entry name" value="GMP_reductase"/>
</dbReference>
<dbReference type="InterPro" id="IPR005991">
    <property type="entry name" value="GUAB1"/>
</dbReference>
<dbReference type="InterPro" id="IPR005990">
    <property type="entry name" value="IMP_DH"/>
</dbReference>
<dbReference type="InterPro" id="IPR001093">
    <property type="entry name" value="IMP_DH_GMPRt"/>
</dbReference>
<dbReference type="NCBIfam" id="TIGR01303">
    <property type="entry name" value="IMP_DH_rel_1"/>
    <property type="match status" value="1"/>
</dbReference>
<dbReference type="NCBIfam" id="NF005869">
    <property type="entry name" value="PRK07807.1"/>
    <property type="match status" value="1"/>
</dbReference>
<dbReference type="PANTHER" id="PTHR43170">
    <property type="entry name" value="GMP REDUCTASE"/>
    <property type="match status" value="1"/>
</dbReference>
<dbReference type="PANTHER" id="PTHR43170:SF5">
    <property type="entry name" value="GMP REDUCTASE"/>
    <property type="match status" value="1"/>
</dbReference>
<dbReference type="Pfam" id="PF00571">
    <property type="entry name" value="CBS"/>
    <property type="match status" value="2"/>
</dbReference>
<dbReference type="Pfam" id="PF00478">
    <property type="entry name" value="IMPDH"/>
    <property type="match status" value="1"/>
</dbReference>
<dbReference type="PIRSF" id="PIRSF000130">
    <property type="entry name" value="IMPDH"/>
    <property type="match status" value="1"/>
</dbReference>
<dbReference type="SMART" id="SM01240">
    <property type="entry name" value="IMPDH"/>
    <property type="match status" value="1"/>
</dbReference>
<dbReference type="SUPFAM" id="SSF54631">
    <property type="entry name" value="CBS-domain pair"/>
    <property type="match status" value="1"/>
</dbReference>
<dbReference type="SUPFAM" id="SSF51412">
    <property type="entry name" value="Inosine monophosphate dehydrogenase (IMPDH)"/>
    <property type="match status" value="1"/>
</dbReference>
<dbReference type="PROSITE" id="PS51371">
    <property type="entry name" value="CBS"/>
    <property type="match status" value="2"/>
</dbReference>
<gene>
    <name type="primary">guaB1</name>
    <name type="ordered locus">Rv1843c</name>
    <name type="ORF">MTCY1A11.01</name>
    <name type="ORF">MTCY359.30</name>
</gene>
<organism>
    <name type="scientific">Mycobacterium tuberculosis (strain ATCC 25618 / H37Rv)</name>
    <dbReference type="NCBI Taxonomy" id="83332"/>
    <lineage>
        <taxon>Bacteria</taxon>
        <taxon>Bacillati</taxon>
        <taxon>Actinomycetota</taxon>
        <taxon>Actinomycetes</taxon>
        <taxon>Mycobacteriales</taxon>
        <taxon>Mycobacteriaceae</taxon>
        <taxon>Mycobacterium</taxon>
        <taxon>Mycobacterium tuberculosis complex</taxon>
    </lineage>
</organism>
<evidence type="ECO:0000250" key="1">
    <source>
        <dbReference type="UniProtKB" id="A0QYE8"/>
    </source>
</evidence>
<evidence type="ECO:0000250" key="2">
    <source>
        <dbReference type="UniProtKB" id="P50097"/>
    </source>
</evidence>
<evidence type="ECO:0000255" key="3">
    <source>
        <dbReference type="HAMAP-Rule" id="MF_02250"/>
    </source>
</evidence>
<evidence type="ECO:0000255" key="4">
    <source>
        <dbReference type="PROSITE-ProRule" id="PRU00703"/>
    </source>
</evidence>
<evidence type="ECO:0000269" key="5">
    <source>
    </source>
</evidence>
<evidence type="ECO:0000269" key="6">
    <source>
    </source>
</evidence>
<evidence type="ECO:0000269" key="7">
    <source>
    </source>
</evidence>
<evidence type="ECO:0000303" key="8">
    <source>
    </source>
</evidence>
<evidence type="ECO:0000305" key="9"/>
<evidence type="ECO:0000305" key="10">
    <source>
    </source>
</evidence>
<feature type="chain" id="PRO_0000093785" description="GMP reductase">
    <location>
        <begin position="1"/>
        <end position="479"/>
    </location>
</feature>
<feature type="domain" description="CBS 1" evidence="4">
    <location>
        <begin position="96"/>
        <end position="153"/>
    </location>
</feature>
<feature type="domain" description="CBS 2" evidence="4">
    <location>
        <begin position="154"/>
        <end position="212"/>
    </location>
</feature>
<feature type="active site" description="Thioimidate intermediate" evidence="2">
    <location>
        <position position="303"/>
    </location>
</feature>
<feature type="binding site" evidence="2">
    <location>
        <begin position="246"/>
        <end position="248"/>
    </location>
    <ligand>
        <name>NADP(+)</name>
        <dbReference type="ChEBI" id="CHEBI:58349"/>
    </ligand>
</feature>
<feature type="binding site" evidence="2">
    <location>
        <begin position="296"/>
        <end position="298"/>
    </location>
    <ligand>
        <name>NADP(+)</name>
        <dbReference type="ChEBI" id="CHEBI:58349"/>
    </ligand>
</feature>
<comment type="function">
    <text evidence="6 7">Involved in the purine-salvage pathway (PubMed:35338694). Catalyzes the NADPH-dependent conversion of GMP to IMP (PubMed:35338694). Has no inosine-5'-monophosphate dehydrogenase (IMPDH) activity (PubMed:21081761).</text>
</comment>
<comment type="catalytic activity">
    <reaction evidence="3 7">
        <text>IMP + NH4(+) + NADP(+) = GMP + NADPH + 2 H(+)</text>
        <dbReference type="Rhea" id="RHEA:17185"/>
        <dbReference type="ChEBI" id="CHEBI:15378"/>
        <dbReference type="ChEBI" id="CHEBI:28938"/>
        <dbReference type="ChEBI" id="CHEBI:57783"/>
        <dbReference type="ChEBI" id="CHEBI:58053"/>
        <dbReference type="ChEBI" id="CHEBI:58115"/>
        <dbReference type="ChEBI" id="CHEBI:58349"/>
        <dbReference type="EC" id="1.7.1.7"/>
    </reaction>
    <physiologicalReaction direction="right-to-left" evidence="3 7">
        <dbReference type="Rhea" id="RHEA:17187"/>
    </physiologicalReaction>
</comment>
<comment type="cofactor">
    <cofactor evidence="3 7">
        <name>a monovalent cation</name>
        <dbReference type="ChEBI" id="CHEBI:60242"/>
    </cofactor>
    <text evidence="7">Activity is highest with Rb(+), followed by K(+), NH4(+) and Cs(+).</text>
</comment>
<comment type="biophysicochemical properties">
    <kinetics>
        <KM evidence="7">63 uM for NADPH (at pH 7.8)</KM>
    </kinetics>
    <phDependence>
        <text evidence="7">Optimum pH is 7.6-8.2.</text>
    </phDependence>
</comment>
<comment type="pathway">
    <text evidence="3 10">Purine metabolism; IMP biosynthesis via salvage pathway.</text>
</comment>
<comment type="subunit">
    <text evidence="1">Homooctamer composed of two tetramers.</text>
</comment>
<comment type="miscellaneous">
    <text evidence="5">Was identified as a high-confidence drug target.</text>
</comment>
<comment type="similarity">
    <text evidence="3 9">Belongs to the IMPDH/GMPR family. GuaB1 subfamily.</text>
</comment>
<reference key="1">
    <citation type="journal article" date="1998" name="Nature">
        <title>Deciphering the biology of Mycobacterium tuberculosis from the complete genome sequence.</title>
        <authorList>
            <person name="Cole S.T."/>
            <person name="Brosch R."/>
            <person name="Parkhill J."/>
            <person name="Garnier T."/>
            <person name="Churcher C.M."/>
            <person name="Harris D.E."/>
            <person name="Gordon S.V."/>
            <person name="Eiglmeier K."/>
            <person name="Gas S."/>
            <person name="Barry C.E. III"/>
            <person name="Tekaia F."/>
            <person name="Badcock K."/>
            <person name="Basham D."/>
            <person name="Brown D."/>
            <person name="Chillingworth T."/>
            <person name="Connor R."/>
            <person name="Davies R.M."/>
            <person name="Devlin K."/>
            <person name="Feltwell T."/>
            <person name="Gentles S."/>
            <person name="Hamlin N."/>
            <person name="Holroyd S."/>
            <person name="Hornsby T."/>
            <person name="Jagels K."/>
            <person name="Krogh A."/>
            <person name="McLean J."/>
            <person name="Moule S."/>
            <person name="Murphy L.D."/>
            <person name="Oliver S."/>
            <person name="Osborne J."/>
            <person name="Quail M.A."/>
            <person name="Rajandream M.A."/>
            <person name="Rogers J."/>
            <person name="Rutter S."/>
            <person name="Seeger K."/>
            <person name="Skelton S."/>
            <person name="Squares S."/>
            <person name="Squares R."/>
            <person name="Sulston J.E."/>
            <person name="Taylor K."/>
            <person name="Whitehead S."/>
            <person name="Barrell B.G."/>
        </authorList>
    </citation>
    <scope>NUCLEOTIDE SEQUENCE [LARGE SCALE GENOMIC DNA]</scope>
    <source>
        <strain>ATCC 25618 / H37Rv</strain>
    </source>
</reference>
<reference key="2">
    <citation type="journal article" date="2008" name="BMC Syst. Biol.">
        <title>targetTB: a target identification pipeline for Mycobacterium tuberculosis through an interactome, reactome and genome-scale structural analysis.</title>
        <authorList>
            <person name="Raman K."/>
            <person name="Yeturu K."/>
            <person name="Chandra N."/>
        </authorList>
    </citation>
    <scope>IDENTIFICATION AS A DRUG TARGET [LARGE SCALE ANALYSIS]</scope>
</reference>
<reference key="3">
    <citation type="journal article" date="2011" name="Microbiology">
        <title>Identification of novel diphenyl urea inhibitors of Mt-GuaB2 active against Mycobacterium tuberculosis.</title>
        <authorList>
            <person name="Usha V."/>
            <person name="Gurcha S.S."/>
            <person name="Lovering A.L."/>
            <person name="Lloyd A.J."/>
            <person name="Papaemmanouil A."/>
            <person name="Reynolds R.C."/>
            <person name="Besra G.S."/>
        </authorList>
    </citation>
    <scope>LACK OF IMP DEHYDROGENASE ACTIVITY</scope>
    <scope>FUNCTION</scope>
    <source>
        <strain>ATCC 25618 / H37Rv</strain>
    </source>
</reference>
<reference key="4">
    <citation type="journal article" date="2011" name="Mol. Cell. Proteomics">
        <title>Proteogenomic analysis of Mycobacterium tuberculosis by high resolution mass spectrometry.</title>
        <authorList>
            <person name="Kelkar D.S."/>
            <person name="Kumar D."/>
            <person name="Kumar P."/>
            <person name="Balakrishnan L."/>
            <person name="Muthusamy B."/>
            <person name="Yadav A.K."/>
            <person name="Shrivastava P."/>
            <person name="Marimuthu A."/>
            <person name="Anand S."/>
            <person name="Sundaram H."/>
            <person name="Kingsbury R."/>
            <person name="Harsha H.C."/>
            <person name="Nair B."/>
            <person name="Prasad T.S."/>
            <person name="Chauhan D.S."/>
            <person name="Katoch K."/>
            <person name="Katoch V.M."/>
            <person name="Kumar P."/>
            <person name="Chaerkady R."/>
            <person name="Ramachandran S."/>
            <person name="Dash D."/>
            <person name="Pandey A."/>
        </authorList>
    </citation>
    <scope>IDENTIFICATION BY MASS SPECTROMETRY [LARGE SCALE ANALYSIS]</scope>
    <source>
        <strain>ATCC 25618 / H37Rv</strain>
    </source>
</reference>
<reference key="5">
    <citation type="journal article" date="2022" name="FEBS J.">
        <title>The mycobacterial guaB1 gene encodes a guanosine 5'-monophosphate reductase with a cystathionine-beta-synthase domain.</title>
        <authorList>
            <person name="Knejzlik Z."/>
            <person name="Dolezal M."/>
            <person name="Herkommerova K."/>
            <person name="Clarova K."/>
            <person name="Klima M."/>
            <person name="Dedola M."/>
            <person name="Zbornikova E."/>
            <person name="Rejman D."/>
            <person name="Pichova I."/>
        </authorList>
    </citation>
    <scope>FUNCTION</scope>
    <scope>CATALYTIC ACTIVITY</scope>
    <scope>COFACTOR</scope>
    <scope>BIOPHYSICOCHEMICAL PROPERTIES</scope>
</reference>
<sequence>MMRFLDGHPPGYDLTYNDVFIVPNRSEVASRFDVDLSTADGSGTTIPVVVANMTAVAGRRMAETVARRGGIVILPQDLPIPAVKQTVAFVKSRDLVLDTPVTLAPDDSVSDAMALIHKRAHGVAVVILEGRPIGLVRESSCLGVDRFTRVRDIAVTDYVTAPAGTEPRKIFDLLEHAPVDVAVLTDADGTLAGVLSRTGAIRAGIYTPATDSAGRLRIGAAVGINGDVGAKARALAEAGVDVLVIDTAHGHQVKTLDAIKAVSALDLGLPLAAGNVVSAEGTRDLLKAGANVVKVGVGPGAMCTTRMMTGVGRPQFSAVLECASAARQLGGHIWADGGIRHPRDVALALAAGASNVMIGSWFAGTYESPGDLMRDRDDQPYKESYGMASKRAVVARTGADNPFDRARKALFEEGISTSRMGLDPDRGGVEDLIDHITSGVRSTCTYVGASNLAELHERAVVGVQSGAGFAEGHPLPAGW</sequence>